<evidence type="ECO:0000250" key="1">
    <source>
        <dbReference type="UniProtKB" id="O94919"/>
    </source>
</evidence>
<evidence type="ECO:0000255" key="2"/>
<evidence type="ECO:0000305" key="3"/>
<organism>
    <name type="scientific">Mus musculus</name>
    <name type="common">Mouse</name>
    <dbReference type="NCBI Taxonomy" id="10090"/>
    <lineage>
        <taxon>Eukaryota</taxon>
        <taxon>Metazoa</taxon>
        <taxon>Chordata</taxon>
        <taxon>Craniata</taxon>
        <taxon>Vertebrata</taxon>
        <taxon>Euteleostomi</taxon>
        <taxon>Mammalia</taxon>
        <taxon>Eutheria</taxon>
        <taxon>Euarchontoglires</taxon>
        <taxon>Glires</taxon>
        <taxon>Rodentia</taxon>
        <taxon>Myomorpha</taxon>
        <taxon>Muroidea</taxon>
        <taxon>Muridae</taxon>
        <taxon>Murinae</taxon>
        <taxon>Mus</taxon>
        <taxon>Mus</taxon>
    </lineage>
</organism>
<accession>Q8C522</accession>
<accession>Q4VA96</accession>
<accession>Q8C5M1</accession>
<accession>Q8VE35</accession>
<comment type="function">
    <text evidence="1">May act as a DNase and a RNase. Plays a role in the modulation of innate immune signaling through the cGAS-STING pathway by interacting with RNF26.</text>
</comment>
<comment type="subunit">
    <text evidence="1">Interacts with RNF26; this interaction is important to modulate innate immune signaling through the cGAS-STING pathway.</text>
</comment>
<comment type="subcellular location">
    <subcellularLocation>
        <location evidence="3">Secreted</location>
    </subcellularLocation>
</comment>
<comment type="similarity">
    <text evidence="3">Belongs to the DNA/RNA non-specific endonuclease family.</text>
</comment>
<name>ENDD1_MOUSE</name>
<proteinExistence type="evidence at protein level"/>
<keyword id="KW-0007">Acetylation</keyword>
<keyword id="KW-0903">Direct protein sequencing</keyword>
<keyword id="KW-0255">Endonuclease</keyword>
<keyword id="KW-0378">Hydrolase</keyword>
<keyword id="KW-0391">Immunity</keyword>
<keyword id="KW-0399">Innate immunity</keyword>
<keyword id="KW-0540">Nuclease</keyword>
<keyword id="KW-1185">Reference proteome</keyword>
<keyword id="KW-0964">Secreted</keyword>
<keyword id="KW-0732">Signal</keyword>
<protein>
    <recommendedName>
        <fullName>Endonuclease domain-containing 1 protein</fullName>
        <ecNumber>3.1.30.-</ecNumber>
    </recommendedName>
</protein>
<feature type="signal peptide" evidence="2">
    <location>
        <begin position="1"/>
        <end position="21"/>
    </location>
</feature>
<feature type="chain" id="PRO_0000019925" description="Endonuclease domain-containing 1 protein">
    <location>
        <begin position="22"/>
        <end position="501"/>
    </location>
</feature>
<feature type="modified residue" description="N6-acetyllysine" evidence="1">
    <location>
        <position position="408"/>
    </location>
</feature>
<feature type="sequence conflict" description="In Ref. 2; AAH19813." evidence="3" ref="2">
    <original>L</original>
    <variation>V</variation>
    <location>
        <position position="118"/>
    </location>
</feature>
<feature type="sequence conflict" description="In Ref. 2; AAH19813." evidence="3" ref="2">
    <original>P</original>
    <variation>H</variation>
    <location>
        <position position="148"/>
    </location>
</feature>
<feature type="sequence conflict" description="In Ref. 1; BAC37111." evidence="3" ref="1">
    <original>V</original>
    <variation>L</variation>
    <location>
        <position position="396"/>
    </location>
</feature>
<feature type="sequence conflict" description="In Ref. 2; AAH19813." evidence="3" ref="2">
    <original>T</original>
    <variation>S</variation>
    <location>
        <position position="440"/>
    </location>
</feature>
<feature type="sequence conflict" description="In Ref. 1; BAC37111." evidence="3" ref="1">
    <original>T</original>
    <variation>N</variation>
    <location>
        <position position="463"/>
    </location>
</feature>
<gene>
    <name type="primary">Endod1</name>
    <name type="synonym">Kiaa0830</name>
</gene>
<sequence>MGCARWLALGGLLALAGLLQARLLLPQQAGFGECDRFFYKGTPPAGLATEAHVRICQRFAGSERFATLYSPGHRIPVFSAFRAARPASRSAEQRGLLEPQIDDPDSNLEEVIDEANALTSVDNLGSKQALNADYIDSDYEIGQLYPFPLNSDLQMATFPLTNSVPMTQSFRERWHMNLNSLMDRALIPHCSEGKDLYILTGAVPSEHRVKGKVTIPEFVWLAACCAVPGEGWAMGFIKHTQDIDVIEDVMLRDLEKLLPHKPQLFQDNCGEMEQDTEKMKKILEVVNQVQDEERSLQSQERMSPLASTQSQRSALLSPEAPPEGGSSFLGQVLGFLATPFIKLFQLIYYLVTAVLRNIVHLLWLVAKQAINTVESCLYHLGEATVSYLVAIGQELVSIPWKVLKVVAKVIRAFLRILCCLLKAVCRALSIPLRVLVDVATFPVYTVGAIPIVCKDIAVGLGGTLSLLFDTAFGTVGGLFQIVFSVFKRIGYKVTLDNSGEF</sequence>
<dbReference type="EC" id="3.1.30.-"/>
<dbReference type="EMBL" id="AK078056">
    <property type="protein sequence ID" value="BAC37111.1"/>
    <property type="molecule type" value="mRNA"/>
</dbReference>
<dbReference type="EMBL" id="AK079741">
    <property type="protein sequence ID" value="BAC37737.1"/>
    <property type="molecule type" value="mRNA"/>
</dbReference>
<dbReference type="EMBL" id="BC019813">
    <property type="protein sequence ID" value="AAH19813.1"/>
    <property type="molecule type" value="mRNA"/>
</dbReference>
<dbReference type="EMBL" id="BC096490">
    <property type="protein sequence ID" value="AAH96490.1"/>
    <property type="molecule type" value="mRNA"/>
</dbReference>
<dbReference type="CCDS" id="CCDS22821.1"/>
<dbReference type="RefSeq" id="NP_082289.2">
    <property type="nucleotide sequence ID" value="NM_028013.3"/>
</dbReference>
<dbReference type="SMR" id="Q8C522"/>
<dbReference type="BioGRID" id="215047">
    <property type="interactions" value="12"/>
</dbReference>
<dbReference type="FunCoup" id="Q8C522">
    <property type="interactions" value="612"/>
</dbReference>
<dbReference type="STRING" id="10090.ENSMUSP00000127751"/>
<dbReference type="iPTMnet" id="Q8C522"/>
<dbReference type="PhosphoSitePlus" id="Q8C522"/>
<dbReference type="SwissPalm" id="Q8C522"/>
<dbReference type="jPOST" id="Q8C522"/>
<dbReference type="PaxDb" id="10090-ENSMUSP00000127751"/>
<dbReference type="PeptideAtlas" id="Q8C522"/>
<dbReference type="ProteomicsDB" id="275661"/>
<dbReference type="Pumba" id="Q8C522"/>
<dbReference type="Antibodypedia" id="2196">
    <property type="antibodies" value="93 antibodies from 20 providers"/>
</dbReference>
<dbReference type="DNASU" id="71946"/>
<dbReference type="Ensembl" id="ENSMUST00000167549.2">
    <property type="protein sequence ID" value="ENSMUSP00000127751.2"/>
    <property type="gene ID" value="ENSMUSG00000037419.10"/>
</dbReference>
<dbReference type="GeneID" id="71946"/>
<dbReference type="KEGG" id="mmu:71946"/>
<dbReference type="UCSC" id="uc009oel.2">
    <property type="organism name" value="mouse"/>
</dbReference>
<dbReference type="AGR" id="MGI:1919196"/>
<dbReference type="CTD" id="23052"/>
<dbReference type="MGI" id="MGI:1919196">
    <property type="gene designation" value="Endod1"/>
</dbReference>
<dbReference type="VEuPathDB" id="HostDB:ENSMUSG00000037419"/>
<dbReference type="eggNOG" id="ENOG502QQYK">
    <property type="taxonomic scope" value="Eukaryota"/>
</dbReference>
<dbReference type="GeneTree" id="ENSGT01030000234592"/>
<dbReference type="HOGENOM" id="CLU_035817_0_0_1"/>
<dbReference type="InParanoid" id="Q8C522"/>
<dbReference type="OMA" id="HVKICQQ"/>
<dbReference type="OrthoDB" id="8572289at2759"/>
<dbReference type="PhylomeDB" id="Q8C522"/>
<dbReference type="TreeFam" id="TF333322"/>
<dbReference type="Reactome" id="R-MMU-114608">
    <property type="pathway name" value="Platelet degranulation"/>
</dbReference>
<dbReference type="BioGRID-ORCS" id="71946">
    <property type="hits" value="3 hits in 77 CRISPR screens"/>
</dbReference>
<dbReference type="ChiTaRS" id="Endod1">
    <property type="organism name" value="mouse"/>
</dbReference>
<dbReference type="PRO" id="PR:Q8C522"/>
<dbReference type="Proteomes" id="UP000000589">
    <property type="component" value="Chromosome 9"/>
</dbReference>
<dbReference type="RNAct" id="Q8C522">
    <property type="molecule type" value="protein"/>
</dbReference>
<dbReference type="Bgee" id="ENSMUSG00000037419">
    <property type="expression patterns" value="Expressed in lateral hypothalamic area and 236 other cell types or tissues"/>
</dbReference>
<dbReference type="ExpressionAtlas" id="Q8C522">
    <property type="expression patterns" value="baseline and differential"/>
</dbReference>
<dbReference type="GO" id="GO:0005576">
    <property type="term" value="C:extracellular region"/>
    <property type="evidence" value="ECO:0007669"/>
    <property type="project" value="UniProtKB-SubCell"/>
</dbReference>
<dbReference type="GO" id="GO:0004519">
    <property type="term" value="F:endonuclease activity"/>
    <property type="evidence" value="ECO:0007669"/>
    <property type="project" value="UniProtKB-KW"/>
</dbReference>
<dbReference type="GO" id="GO:0046872">
    <property type="term" value="F:metal ion binding"/>
    <property type="evidence" value="ECO:0007669"/>
    <property type="project" value="InterPro"/>
</dbReference>
<dbReference type="GO" id="GO:0003676">
    <property type="term" value="F:nucleic acid binding"/>
    <property type="evidence" value="ECO:0007669"/>
    <property type="project" value="InterPro"/>
</dbReference>
<dbReference type="GO" id="GO:0045087">
    <property type="term" value="P:innate immune response"/>
    <property type="evidence" value="ECO:0007669"/>
    <property type="project" value="UniProtKB-KW"/>
</dbReference>
<dbReference type="CDD" id="cd00091">
    <property type="entry name" value="NUC"/>
    <property type="match status" value="1"/>
</dbReference>
<dbReference type="Gene3D" id="3.40.570.10">
    <property type="entry name" value="Extracellular Endonuclease, subunit A"/>
    <property type="match status" value="1"/>
</dbReference>
<dbReference type="InterPro" id="IPR044929">
    <property type="entry name" value="DNA/RNA_non-sp_Endonuclease_sf"/>
</dbReference>
<dbReference type="InterPro" id="IPR039015">
    <property type="entry name" value="ENDOD1"/>
</dbReference>
<dbReference type="InterPro" id="IPR020821">
    <property type="entry name" value="ENPP1-3/EXOG-like_nuc-like"/>
</dbReference>
<dbReference type="InterPro" id="IPR044925">
    <property type="entry name" value="His-Me_finger_sf"/>
</dbReference>
<dbReference type="PANTHER" id="PTHR21472:SF8">
    <property type="entry name" value="ENDONUCLEASE DOMAIN-CONTAINING 1 PROTEIN"/>
    <property type="match status" value="1"/>
</dbReference>
<dbReference type="PANTHER" id="PTHR21472">
    <property type="entry name" value="ENDONUCLEASE DOMAIN-CONTAINING 1 PROTEIN ENDOD1"/>
    <property type="match status" value="1"/>
</dbReference>
<dbReference type="SMART" id="SM00477">
    <property type="entry name" value="NUC"/>
    <property type="match status" value="1"/>
</dbReference>
<dbReference type="SUPFAM" id="SSF54060">
    <property type="entry name" value="His-Me finger endonucleases"/>
    <property type="match status" value="1"/>
</dbReference>
<reference key="1">
    <citation type="journal article" date="2005" name="Science">
        <title>The transcriptional landscape of the mammalian genome.</title>
        <authorList>
            <person name="Carninci P."/>
            <person name="Kasukawa T."/>
            <person name="Katayama S."/>
            <person name="Gough J."/>
            <person name="Frith M.C."/>
            <person name="Maeda N."/>
            <person name="Oyama R."/>
            <person name="Ravasi T."/>
            <person name="Lenhard B."/>
            <person name="Wells C."/>
            <person name="Kodzius R."/>
            <person name="Shimokawa K."/>
            <person name="Bajic V.B."/>
            <person name="Brenner S.E."/>
            <person name="Batalov S."/>
            <person name="Forrest A.R."/>
            <person name="Zavolan M."/>
            <person name="Davis M.J."/>
            <person name="Wilming L.G."/>
            <person name="Aidinis V."/>
            <person name="Allen J.E."/>
            <person name="Ambesi-Impiombato A."/>
            <person name="Apweiler R."/>
            <person name="Aturaliya R.N."/>
            <person name="Bailey T.L."/>
            <person name="Bansal M."/>
            <person name="Baxter L."/>
            <person name="Beisel K.W."/>
            <person name="Bersano T."/>
            <person name="Bono H."/>
            <person name="Chalk A.M."/>
            <person name="Chiu K.P."/>
            <person name="Choudhary V."/>
            <person name="Christoffels A."/>
            <person name="Clutterbuck D.R."/>
            <person name="Crowe M.L."/>
            <person name="Dalla E."/>
            <person name="Dalrymple B.P."/>
            <person name="de Bono B."/>
            <person name="Della Gatta G."/>
            <person name="di Bernardo D."/>
            <person name="Down T."/>
            <person name="Engstrom P."/>
            <person name="Fagiolini M."/>
            <person name="Faulkner G."/>
            <person name="Fletcher C.F."/>
            <person name="Fukushima T."/>
            <person name="Furuno M."/>
            <person name="Futaki S."/>
            <person name="Gariboldi M."/>
            <person name="Georgii-Hemming P."/>
            <person name="Gingeras T.R."/>
            <person name="Gojobori T."/>
            <person name="Green R.E."/>
            <person name="Gustincich S."/>
            <person name="Harbers M."/>
            <person name="Hayashi Y."/>
            <person name="Hensch T.K."/>
            <person name="Hirokawa N."/>
            <person name="Hill D."/>
            <person name="Huminiecki L."/>
            <person name="Iacono M."/>
            <person name="Ikeo K."/>
            <person name="Iwama A."/>
            <person name="Ishikawa T."/>
            <person name="Jakt M."/>
            <person name="Kanapin A."/>
            <person name="Katoh M."/>
            <person name="Kawasawa Y."/>
            <person name="Kelso J."/>
            <person name="Kitamura H."/>
            <person name="Kitano H."/>
            <person name="Kollias G."/>
            <person name="Krishnan S.P."/>
            <person name="Kruger A."/>
            <person name="Kummerfeld S.K."/>
            <person name="Kurochkin I.V."/>
            <person name="Lareau L.F."/>
            <person name="Lazarevic D."/>
            <person name="Lipovich L."/>
            <person name="Liu J."/>
            <person name="Liuni S."/>
            <person name="McWilliam S."/>
            <person name="Madan Babu M."/>
            <person name="Madera M."/>
            <person name="Marchionni L."/>
            <person name="Matsuda H."/>
            <person name="Matsuzawa S."/>
            <person name="Miki H."/>
            <person name="Mignone F."/>
            <person name="Miyake S."/>
            <person name="Morris K."/>
            <person name="Mottagui-Tabar S."/>
            <person name="Mulder N."/>
            <person name="Nakano N."/>
            <person name="Nakauchi H."/>
            <person name="Ng P."/>
            <person name="Nilsson R."/>
            <person name="Nishiguchi S."/>
            <person name="Nishikawa S."/>
            <person name="Nori F."/>
            <person name="Ohara O."/>
            <person name="Okazaki Y."/>
            <person name="Orlando V."/>
            <person name="Pang K.C."/>
            <person name="Pavan W.J."/>
            <person name="Pavesi G."/>
            <person name="Pesole G."/>
            <person name="Petrovsky N."/>
            <person name="Piazza S."/>
            <person name="Reed J."/>
            <person name="Reid J.F."/>
            <person name="Ring B.Z."/>
            <person name="Ringwald M."/>
            <person name="Rost B."/>
            <person name="Ruan Y."/>
            <person name="Salzberg S.L."/>
            <person name="Sandelin A."/>
            <person name="Schneider C."/>
            <person name="Schoenbach C."/>
            <person name="Sekiguchi K."/>
            <person name="Semple C.A."/>
            <person name="Seno S."/>
            <person name="Sessa L."/>
            <person name="Sheng Y."/>
            <person name="Shibata Y."/>
            <person name="Shimada H."/>
            <person name="Shimada K."/>
            <person name="Silva D."/>
            <person name="Sinclair B."/>
            <person name="Sperling S."/>
            <person name="Stupka E."/>
            <person name="Sugiura K."/>
            <person name="Sultana R."/>
            <person name="Takenaka Y."/>
            <person name="Taki K."/>
            <person name="Tammoja K."/>
            <person name="Tan S.L."/>
            <person name="Tang S."/>
            <person name="Taylor M.S."/>
            <person name="Tegner J."/>
            <person name="Teichmann S.A."/>
            <person name="Ueda H.R."/>
            <person name="van Nimwegen E."/>
            <person name="Verardo R."/>
            <person name="Wei C.L."/>
            <person name="Yagi K."/>
            <person name="Yamanishi H."/>
            <person name="Zabarovsky E."/>
            <person name="Zhu S."/>
            <person name="Zimmer A."/>
            <person name="Hide W."/>
            <person name="Bult C."/>
            <person name="Grimmond S.M."/>
            <person name="Teasdale R.D."/>
            <person name="Liu E.T."/>
            <person name="Brusic V."/>
            <person name="Quackenbush J."/>
            <person name="Wahlestedt C."/>
            <person name="Mattick J.S."/>
            <person name="Hume D.A."/>
            <person name="Kai C."/>
            <person name="Sasaki D."/>
            <person name="Tomaru Y."/>
            <person name="Fukuda S."/>
            <person name="Kanamori-Katayama M."/>
            <person name="Suzuki M."/>
            <person name="Aoki J."/>
            <person name="Arakawa T."/>
            <person name="Iida J."/>
            <person name="Imamura K."/>
            <person name="Itoh M."/>
            <person name="Kato T."/>
            <person name="Kawaji H."/>
            <person name="Kawagashira N."/>
            <person name="Kawashima T."/>
            <person name="Kojima M."/>
            <person name="Kondo S."/>
            <person name="Konno H."/>
            <person name="Nakano K."/>
            <person name="Ninomiya N."/>
            <person name="Nishio T."/>
            <person name="Okada M."/>
            <person name="Plessy C."/>
            <person name="Shibata K."/>
            <person name="Shiraki T."/>
            <person name="Suzuki S."/>
            <person name="Tagami M."/>
            <person name="Waki K."/>
            <person name="Watahiki A."/>
            <person name="Okamura-Oho Y."/>
            <person name="Suzuki H."/>
            <person name="Kawai J."/>
            <person name="Hayashizaki Y."/>
        </authorList>
    </citation>
    <scope>NUCLEOTIDE SEQUENCE [LARGE SCALE MRNA]</scope>
    <source>
        <strain>C57BL/6J</strain>
        <tissue>Medulla oblongata</tissue>
        <tissue>Thymus</tissue>
    </source>
</reference>
<reference key="2">
    <citation type="journal article" date="2004" name="Genome Res.">
        <title>The status, quality, and expansion of the NIH full-length cDNA project: the Mammalian Gene Collection (MGC).</title>
        <authorList>
            <consortium name="The MGC Project Team"/>
        </authorList>
    </citation>
    <scope>NUCLEOTIDE SEQUENCE [LARGE SCALE MRNA]</scope>
    <source>
        <strain>Czech II</strain>
        <strain>FVB/N-3</strain>
        <tissue>Mammary tumor</tissue>
    </source>
</reference>
<reference key="3">
    <citation type="submission" date="2007-04" db="UniProtKB">
        <authorList>
            <person name="Lubec G."/>
            <person name="Kang S.U."/>
        </authorList>
    </citation>
    <scope>PROTEIN SEQUENCE OF 195-208 AND 239-252</scope>
    <scope>IDENTIFICATION BY MASS SPECTROMETRY</scope>
    <source>
        <strain>C57BL/6J</strain>
        <tissue>Brain</tissue>
    </source>
</reference>
<reference key="4">
    <citation type="journal article" date="2010" name="Cell">
        <title>A tissue-specific atlas of mouse protein phosphorylation and expression.</title>
        <authorList>
            <person name="Huttlin E.L."/>
            <person name="Jedrychowski M.P."/>
            <person name="Elias J.E."/>
            <person name="Goswami T."/>
            <person name="Rad R."/>
            <person name="Beausoleil S.A."/>
            <person name="Villen J."/>
            <person name="Haas W."/>
            <person name="Sowa M.E."/>
            <person name="Gygi S.P."/>
        </authorList>
    </citation>
    <scope>IDENTIFICATION BY MASS SPECTROMETRY [LARGE SCALE ANALYSIS]</scope>
    <source>
        <tissue>Brain</tissue>
        <tissue>Kidney</tissue>
        <tissue>Lung</tissue>
        <tissue>Spleen</tissue>
    </source>
</reference>